<accession>Q47LH2</accession>
<dbReference type="EMBL" id="CP000088">
    <property type="protein sequence ID" value="AAZ56700.1"/>
    <property type="molecule type" value="Genomic_DNA"/>
</dbReference>
<dbReference type="RefSeq" id="WP_011293090.1">
    <property type="nucleotide sequence ID" value="NC_007333.1"/>
</dbReference>
<dbReference type="SMR" id="Q47LH2"/>
<dbReference type="STRING" id="269800.Tfu_2667"/>
<dbReference type="KEGG" id="tfu:Tfu_2667"/>
<dbReference type="eggNOG" id="COG0267">
    <property type="taxonomic scope" value="Bacteria"/>
</dbReference>
<dbReference type="HOGENOM" id="CLU_190949_0_2_11"/>
<dbReference type="OrthoDB" id="21586at2"/>
<dbReference type="GO" id="GO:0005737">
    <property type="term" value="C:cytoplasm"/>
    <property type="evidence" value="ECO:0007669"/>
    <property type="project" value="UniProtKB-ARBA"/>
</dbReference>
<dbReference type="GO" id="GO:1990904">
    <property type="term" value="C:ribonucleoprotein complex"/>
    <property type="evidence" value="ECO:0007669"/>
    <property type="project" value="UniProtKB-KW"/>
</dbReference>
<dbReference type="GO" id="GO:0005840">
    <property type="term" value="C:ribosome"/>
    <property type="evidence" value="ECO:0007669"/>
    <property type="project" value="UniProtKB-KW"/>
</dbReference>
<dbReference type="GO" id="GO:0003735">
    <property type="term" value="F:structural constituent of ribosome"/>
    <property type="evidence" value="ECO:0007669"/>
    <property type="project" value="InterPro"/>
</dbReference>
<dbReference type="GO" id="GO:0006412">
    <property type="term" value="P:translation"/>
    <property type="evidence" value="ECO:0007669"/>
    <property type="project" value="UniProtKB-UniRule"/>
</dbReference>
<dbReference type="Gene3D" id="2.20.28.120">
    <property type="entry name" value="Ribosomal protein L33"/>
    <property type="match status" value="1"/>
</dbReference>
<dbReference type="HAMAP" id="MF_00294">
    <property type="entry name" value="Ribosomal_bL33"/>
    <property type="match status" value="1"/>
</dbReference>
<dbReference type="InterPro" id="IPR001705">
    <property type="entry name" value="Ribosomal_bL33"/>
</dbReference>
<dbReference type="InterPro" id="IPR018264">
    <property type="entry name" value="Ribosomal_bL33_CS"/>
</dbReference>
<dbReference type="InterPro" id="IPR038584">
    <property type="entry name" value="Ribosomal_bL33_sf"/>
</dbReference>
<dbReference type="InterPro" id="IPR011332">
    <property type="entry name" value="Ribosomal_zn-bd"/>
</dbReference>
<dbReference type="NCBIfam" id="NF001764">
    <property type="entry name" value="PRK00504.1"/>
    <property type="match status" value="1"/>
</dbReference>
<dbReference type="NCBIfam" id="NF001860">
    <property type="entry name" value="PRK00595.1"/>
    <property type="match status" value="1"/>
</dbReference>
<dbReference type="NCBIfam" id="TIGR01023">
    <property type="entry name" value="rpmG_bact"/>
    <property type="match status" value="1"/>
</dbReference>
<dbReference type="PANTHER" id="PTHR43168">
    <property type="entry name" value="50S RIBOSOMAL PROTEIN L33, CHLOROPLASTIC"/>
    <property type="match status" value="1"/>
</dbReference>
<dbReference type="PANTHER" id="PTHR43168:SF2">
    <property type="entry name" value="LARGE RIBOSOMAL SUBUNIT PROTEIN BL33C"/>
    <property type="match status" value="1"/>
</dbReference>
<dbReference type="Pfam" id="PF00471">
    <property type="entry name" value="Ribosomal_L33"/>
    <property type="match status" value="1"/>
</dbReference>
<dbReference type="SUPFAM" id="SSF57829">
    <property type="entry name" value="Zn-binding ribosomal proteins"/>
    <property type="match status" value="1"/>
</dbReference>
<dbReference type="PROSITE" id="PS00582">
    <property type="entry name" value="RIBOSOMAL_L33"/>
    <property type="match status" value="1"/>
</dbReference>
<protein>
    <recommendedName>
        <fullName evidence="1">Large ribosomal subunit protein bL33</fullName>
    </recommendedName>
    <alternativeName>
        <fullName evidence="2">50S ribosomal protein L33</fullName>
    </alternativeName>
</protein>
<organism>
    <name type="scientific">Thermobifida fusca (strain YX)</name>
    <dbReference type="NCBI Taxonomy" id="269800"/>
    <lineage>
        <taxon>Bacteria</taxon>
        <taxon>Bacillati</taxon>
        <taxon>Actinomycetota</taxon>
        <taxon>Actinomycetes</taxon>
        <taxon>Streptosporangiales</taxon>
        <taxon>Nocardiopsidaceae</taxon>
        <taxon>Thermobifida</taxon>
    </lineage>
</organism>
<evidence type="ECO:0000255" key="1">
    <source>
        <dbReference type="HAMAP-Rule" id="MF_00294"/>
    </source>
</evidence>
<evidence type="ECO:0000305" key="2"/>
<feature type="chain" id="PRO_1000004206" description="Large ribosomal subunit protein bL33">
    <location>
        <begin position="1"/>
        <end position="54"/>
    </location>
</feature>
<keyword id="KW-0687">Ribonucleoprotein</keyword>
<keyword id="KW-0689">Ribosomal protein</keyword>
<name>RL33_THEFY</name>
<proteinExistence type="inferred from homology"/>
<sequence length="54" mass="6638">MAATDVRPKITLACQECKHRNYITRKNRRNTPDRLELRKYCPNCRTHREHRETR</sequence>
<reference key="1">
    <citation type="journal article" date="2007" name="J. Bacteriol.">
        <title>Genome sequence and analysis of the soil cellulolytic actinomycete Thermobifida fusca YX.</title>
        <authorList>
            <person name="Lykidis A."/>
            <person name="Mavromatis K."/>
            <person name="Ivanova N."/>
            <person name="Anderson I."/>
            <person name="Land M."/>
            <person name="DiBartolo G."/>
            <person name="Martinez M."/>
            <person name="Lapidus A."/>
            <person name="Lucas S."/>
            <person name="Copeland A."/>
            <person name="Richardson P."/>
            <person name="Wilson D.B."/>
            <person name="Kyrpides N."/>
        </authorList>
    </citation>
    <scope>NUCLEOTIDE SEQUENCE [LARGE SCALE GENOMIC DNA]</scope>
    <source>
        <strain>YX</strain>
    </source>
</reference>
<comment type="similarity">
    <text evidence="1">Belongs to the bacterial ribosomal protein bL33 family.</text>
</comment>
<gene>
    <name evidence="1" type="primary">rpmG</name>
    <name type="ordered locus">Tfu_2667</name>
</gene>